<gene>
    <name evidence="1" type="primary">rpsT</name>
    <name type="ordered locus">Clos_1225</name>
</gene>
<evidence type="ECO:0000255" key="1">
    <source>
        <dbReference type="HAMAP-Rule" id="MF_00500"/>
    </source>
</evidence>
<evidence type="ECO:0000305" key="2"/>
<proteinExistence type="inferred from homology"/>
<protein>
    <recommendedName>
        <fullName evidence="1">Small ribosomal subunit protein bS20</fullName>
    </recommendedName>
    <alternativeName>
        <fullName evidence="2">30S ribosomal protein S20</fullName>
    </alternativeName>
</protein>
<comment type="function">
    <text evidence="1">Binds directly to 16S ribosomal RNA.</text>
</comment>
<comment type="similarity">
    <text evidence="1">Belongs to the bacterial ribosomal protein bS20 family.</text>
</comment>
<sequence>MANIKSAQKRILVINKKTARNRMIKSQLKTAIRRFEESLAAGNFEEAKTRLKLVEKKLHQAAAKGTIHKAKASRKVSRLATKLNKAI</sequence>
<feature type="chain" id="PRO_1000060487" description="Small ribosomal subunit protein bS20">
    <location>
        <begin position="1"/>
        <end position="87"/>
    </location>
</feature>
<accession>A8MFA2</accession>
<dbReference type="EMBL" id="CP000853">
    <property type="protein sequence ID" value="ABW18771.1"/>
    <property type="molecule type" value="Genomic_DNA"/>
</dbReference>
<dbReference type="RefSeq" id="WP_012159083.1">
    <property type="nucleotide sequence ID" value="NC_009922.1"/>
</dbReference>
<dbReference type="SMR" id="A8MFA2"/>
<dbReference type="STRING" id="350688.Clos_1225"/>
<dbReference type="KEGG" id="aoe:Clos_1225"/>
<dbReference type="eggNOG" id="COG0268">
    <property type="taxonomic scope" value="Bacteria"/>
</dbReference>
<dbReference type="HOGENOM" id="CLU_160655_0_0_9"/>
<dbReference type="OrthoDB" id="9808392at2"/>
<dbReference type="Proteomes" id="UP000000269">
    <property type="component" value="Chromosome"/>
</dbReference>
<dbReference type="GO" id="GO:0005829">
    <property type="term" value="C:cytosol"/>
    <property type="evidence" value="ECO:0007669"/>
    <property type="project" value="TreeGrafter"/>
</dbReference>
<dbReference type="GO" id="GO:0015935">
    <property type="term" value="C:small ribosomal subunit"/>
    <property type="evidence" value="ECO:0007669"/>
    <property type="project" value="TreeGrafter"/>
</dbReference>
<dbReference type="GO" id="GO:0070181">
    <property type="term" value="F:small ribosomal subunit rRNA binding"/>
    <property type="evidence" value="ECO:0007669"/>
    <property type="project" value="TreeGrafter"/>
</dbReference>
<dbReference type="GO" id="GO:0003735">
    <property type="term" value="F:structural constituent of ribosome"/>
    <property type="evidence" value="ECO:0007669"/>
    <property type="project" value="InterPro"/>
</dbReference>
<dbReference type="GO" id="GO:0006412">
    <property type="term" value="P:translation"/>
    <property type="evidence" value="ECO:0007669"/>
    <property type="project" value="UniProtKB-UniRule"/>
</dbReference>
<dbReference type="FunFam" id="1.20.58.110:FF:000001">
    <property type="entry name" value="30S ribosomal protein S20"/>
    <property type="match status" value="1"/>
</dbReference>
<dbReference type="Gene3D" id="1.20.58.110">
    <property type="entry name" value="Ribosomal protein S20"/>
    <property type="match status" value="1"/>
</dbReference>
<dbReference type="HAMAP" id="MF_00500">
    <property type="entry name" value="Ribosomal_bS20"/>
    <property type="match status" value="1"/>
</dbReference>
<dbReference type="InterPro" id="IPR002583">
    <property type="entry name" value="Ribosomal_bS20"/>
</dbReference>
<dbReference type="InterPro" id="IPR036510">
    <property type="entry name" value="Ribosomal_bS20_sf"/>
</dbReference>
<dbReference type="NCBIfam" id="TIGR00029">
    <property type="entry name" value="S20"/>
    <property type="match status" value="1"/>
</dbReference>
<dbReference type="PANTHER" id="PTHR33398">
    <property type="entry name" value="30S RIBOSOMAL PROTEIN S20"/>
    <property type="match status" value="1"/>
</dbReference>
<dbReference type="PANTHER" id="PTHR33398:SF1">
    <property type="entry name" value="SMALL RIBOSOMAL SUBUNIT PROTEIN BS20C"/>
    <property type="match status" value="1"/>
</dbReference>
<dbReference type="Pfam" id="PF01649">
    <property type="entry name" value="Ribosomal_S20p"/>
    <property type="match status" value="1"/>
</dbReference>
<dbReference type="SUPFAM" id="SSF46992">
    <property type="entry name" value="Ribosomal protein S20"/>
    <property type="match status" value="1"/>
</dbReference>
<reference key="1">
    <citation type="submission" date="2007-10" db="EMBL/GenBank/DDBJ databases">
        <title>Complete genome of Alkaliphilus oremlandii OhILAs.</title>
        <authorList>
            <person name="Copeland A."/>
            <person name="Lucas S."/>
            <person name="Lapidus A."/>
            <person name="Barry K."/>
            <person name="Detter J.C."/>
            <person name="Glavina del Rio T."/>
            <person name="Hammon N."/>
            <person name="Israni S."/>
            <person name="Dalin E."/>
            <person name="Tice H."/>
            <person name="Pitluck S."/>
            <person name="Chain P."/>
            <person name="Malfatti S."/>
            <person name="Shin M."/>
            <person name="Vergez L."/>
            <person name="Schmutz J."/>
            <person name="Larimer F."/>
            <person name="Land M."/>
            <person name="Hauser L."/>
            <person name="Kyrpides N."/>
            <person name="Mikhailova N."/>
            <person name="Stolz J.F."/>
            <person name="Dawson A."/>
            <person name="Fisher E."/>
            <person name="Crable B."/>
            <person name="Perera E."/>
            <person name="Lisak J."/>
            <person name="Ranganathan M."/>
            <person name="Basu P."/>
            <person name="Richardson P."/>
        </authorList>
    </citation>
    <scope>NUCLEOTIDE SEQUENCE [LARGE SCALE GENOMIC DNA]</scope>
    <source>
        <strain>OhILAs</strain>
    </source>
</reference>
<name>RS20_ALKOO</name>
<keyword id="KW-1185">Reference proteome</keyword>
<keyword id="KW-0687">Ribonucleoprotein</keyword>
<keyword id="KW-0689">Ribosomal protein</keyword>
<keyword id="KW-0694">RNA-binding</keyword>
<keyword id="KW-0699">rRNA-binding</keyword>
<organism>
    <name type="scientific">Alkaliphilus oremlandii (strain OhILAs)</name>
    <name type="common">Clostridium oremlandii (strain OhILAs)</name>
    <dbReference type="NCBI Taxonomy" id="350688"/>
    <lineage>
        <taxon>Bacteria</taxon>
        <taxon>Bacillati</taxon>
        <taxon>Bacillota</taxon>
        <taxon>Clostridia</taxon>
        <taxon>Peptostreptococcales</taxon>
        <taxon>Natronincolaceae</taxon>
        <taxon>Alkaliphilus</taxon>
    </lineage>
</organism>